<evidence type="ECO:0000250" key="1">
    <source>
        <dbReference type="UniProtKB" id="O15355"/>
    </source>
</evidence>
<evidence type="ECO:0000250" key="2">
    <source>
        <dbReference type="UniProtKB" id="P35813"/>
    </source>
</evidence>
<evidence type="ECO:0000250" key="3">
    <source>
        <dbReference type="UniProtKB" id="P39966"/>
    </source>
</evidence>
<evidence type="ECO:0000255" key="4">
    <source>
        <dbReference type="PROSITE-ProRule" id="PRU01082"/>
    </source>
</evidence>
<evidence type="ECO:0000256" key="5">
    <source>
        <dbReference type="SAM" id="MobiDB-lite"/>
    </source>
</evidence>
<evidence type="ECO:0000269" key="6">
    <source>
    </source>
</evidence>
<evidence type="ECO:0000305" key="7"/>
<evidence type="ECO:0000305" key="8">
    <source>
    </source>
</evidence>
<evidence type="ECO:0000312" key="9">
    <source>
        <dbReference type="RGD" id="628676"/>
    </source>
</evidence>
<reference key="1">
    <citation type="journal article" date="2004" name="Nature">
        <title>Genome sequence of the Brown Norway rat yields insights into mammalian evolution.</title>
        <authorList>
            <person name="Gibbs R.A."/>
            <person name="Weinstock G.M."/>
            <person name="Metzker M.L."/>
            <person name="Muzny D.M."/>
            <person name="Sodergren E.J."/>
            <person name="Scherer S."/>
            <person name="Scott G."/>
            <person name="Steffen D."/>
            <person name="Worley K.C."/>
            <person name="Burch P.E."/>
            <person name="Okwuonu G."/>
            <person name="Hines S."/>
            <person name="Lewis L."/>
            <person name="Deramo C."/>
            <person name="Delgado O."/>
            <person name="Dugan-Rocha S."/>
            <person name="Miner G."/>
            <person name="Morgan M."/>
            <person name="Hawes A."/>
            <person name="Gill R."/>
            <person name="Holt R.A."/>
            <person name="Adams M.D."/>
            <person name="Amanatides P.G."/>
            <person name="Baden-Tillson H."/>
            <person name="Barnstead M."/>
            <person name="Chin S."/>
            <person name="Evans C.A."/>
            <person name="Ferriera S."/>
            <person name="Fosler C."/>
            <person name="Glodek A."/>
            <person name="Gu Z."/>
            <person name="Jennings D."/>
            <person name="Kraft C.L."/>
            <person name="Nguyen T."/>
            <person name="Pfannkoch C.M."/>
            <person name="Sitter C."/>
            <person name="Sutton G.G."/>
            <person name="Venter J.C."/>
            <person name="Woodage T."/>
            <person name="Smith D."/>
            <person name="Lee H.-M."/>
            <person name="Gustafson E."/>
            <person name="Cahill P."/>
            <person name="Kana A."/>
            <person name="Doucette-Stamm L."/>
            <person name="Weinstock K."/>
            <person name="Fechtel K."/>
            <person name="Weiss R.B."/>
            <person name="Dunn D.M."/>
            <person name="Green E.D."/>
            <person name="Blakesley R.W."/>
            <person name="Bouffard G.G."/>
            <person name="De Jong P.J."/>
            <person name="Osoegawa K."/>
            <person name="Zhu B."/>
            <person name="Marra M."/>
            <person name="Schein J."/>
            <person name="Bosdet I."/>
            <person name="Fjell C."/>
            <person name="Jones S."/>
            <person name="Krzywinski M."/>
            <person name="Mathewson C."/>
            <person name="Siddiqui A."/>
            <person name="Wye N."/>
            <person name="McPherson J."/>
            <person name="Zhao S."/>
            <person name="Fraser C.M."/>
            <person name="Shetty J."/>
            <person name="Shatsman S."/>
            <person name="Geer K."/>
            <person name="Chen Y."/>
            <person name="Abramzon S."/>
            <person name="Nierman W.C."/>
            <person name="Havlak P.H."/>
            <person name="Chen R."/>
            <person name="Durbin K.J."/>
            <person name="Egan A."/>
            <person name="Ren Y."/>
            <person name="Song X.-Z."/>
            <person name="Li B."/>
            <person name="Liu Y."/>
            <person name="Qin X."/>
            <person name="Cawley S."/>
            <person name="Cooney A.J."/>
            <person name="D'Souza L.M."/>
            <person name="Martin K."/>
            <person name="Wu J.Q."/>
            <person name="Gonzalez-Garay M.L."/>
            <person name="Jackson A.R."/>
            <person name="Kalafus K.J."/>
            <person name="McLeod M.P."/>
            <person name="Milosavljevic A."/>
            <person name="Virk D."/>
            <person name="Volkov A."/>
            <person name="Wheeler D.A."/>
            <person name="Zhang Z."/>
            <person name="Bailey J.A."/>
            <person name="Eichler E.E."/>
            <person name="Tuzun E."/>
            <person name="Birney E."/>
            <person name="Mongin E."/>
            <person name="Ureta-Vidal A."/>
            <person name="Woodwark C."/>
            <person name="Zdobnov E."/>
            <person name="Bork P."/>
            <person name="Suyama M."/>
            <person name="Torrents D."/>
            <person name="Alexandersson M."/>
            <person name="Trask B.J."/>
            <person name="Young J.M."/>
            <person name="Huang H."/>
            <person name="Wang H."/>
            <person name="Xing H."/>
            <person name="Daniels S."/>
            <person name="Gietzen D."/>
            <person name="Schmidt J."/>
            <person name="Stevens K."/>
            <person name="Vitt U."/>
            <person name="Wingrove J."/>
            <person name="Camara F."/>
            <person name="Mar Alba M."/>
            <person name="Abril J.F."/>
            <person name="Guigo R."/>
            <person name="Smit A."/>
            <person name="Dubchak I."/>
            <person name="Rubin E.M."/>
            <person name="Couronne O."/>
            <person name="Poliakov A."/>
            <person name="Huebner N."/>
            <person name="Ganten D."/>
            <person name="Goesele C."/>
            <person name="Hummel O."/>
            <person name="Kreitler T."/>
            <person name="Lee Y.-A."/>
            <person name="Monti J."/>
            <person name="Schulz H."/>
            <person name="Zimdahl H."/>
            <person name="Himmelbauer H."/>
            <person name="Lehrach H."/>
            <person name="Jacob H.J."/>
            <person name="Bromberg S."/>
            <person name="Gullings-Handley J."/>
            <person name="Jensen-Seaman M.I."/>
            <person name="Kwitek A.E."/>
            <person name="Lazar J."/>
            <person name="Pasko D."/>
            <person name="Tonellato P.J."/>
            <person name="Twigger S."/>
            <person name="Ponting C.P."/>
            <person name="Duarte J.M."/>
            <person name="Rice S."/>
            <person name="Goodstadt L."/>
            <person name="Beatson S.A."/>
            <person name="Emes R.D."/>
            <person name="Winter E.E."/>
            <person name="Webber C."/>
            <person name="Brandt P."/>
            <person name="Nyakatura G."/>
            <person name="Adetobi M."/>
            <person name="Chiaromonte F."/>
            <person name="Elnitski L."/>
            <person name="Eswara P."/>
            <person name="Hardison R.C."/>
            <person name="Hou M."/>
            <person name="Kolbe D."/>
            <person name="Makova K."/>
            <person name="Miller W."/>
            <person name="Nekrutenko A."/>
            <person name="Riemer C."/>
            <person name="Schwartz S."/>
            <person name="Taylor J."/>
            <person name="Yang S."/>
            <person name="Zhang Y."/>
            <person name="Lindpaintner K."/>
            <person name="Andrews T.D."/>
            <person name="Caccamo M."/>
            <person name="Clamp M."/>
            <person name="Clarke L."/>
            <person name="Curwen V."/>
            <person name="Durbin R.M."/>
            <person name="Eyras E."/>
            <person name="Searle S.M."/>
            <person name="Cooper G.M."/>
            <person name="Batzoglou S."/>
            <person name="Brudno M."/>
            <person name="Sidow A."/>
            <person name="Stone E.A."/>
            <person name="Payseur B.A."/>
            <person name="Bourque G."/>
            <person name="Lopez-Otin C."/>
            <person name="Puente X.S."/>
            <person name="Chakrabarti K."/>
            <person name="Chatterji S."/>
            <person name="Dewey C."/>
            <person name="Pachter L."/>
            <person name="Bray N."/>
            <person name="Yap V.B."/>
            <person name="Caspi A."/>
            <person name="Tesler G."/>
            <person name="Pevzner P.A."/>
            <person name="Haussler D."/>
            <person name="Roskin K.M."/>
            <person name="Baertsch R."/>
            <person name="Clawson H."/>
            <person name="Furey T.S."/>
            <person name="Hinrichs A.S."/>
            <person name="Karolchik D."/>
            <person name="Kent W.J."/>
            <person name="Rosenbloom K.R."/>
            <person name="Trumbower H."/>
            <person name="Weirauch M."/>
            <person name="Cooper D.N."/>
            <person name="Stenson P.D."/>
            <person name="Ma B."/>
            <person name="Brent M."/>
            <person name="Arumugam M."/>
            <person name="Shteynberg D."/>
            <person name="Copley R.R."/>
            <person name="Taylor M.S."/>
            <person name="Riethman H."/>
            <person name="Mudunuri U."/>
            <person name="Peterson J."/>
            <person name="Guyer M."/>
            <person name="Felsenfeld A."/>
            <person name="Old S."/>
            <person name="Mockrin S."/>
            <person name="Collins F.S."/>
        </authorList>
    </citation>
    <scope>NUCLEOTIDE SEQUENCE [LARGE SCALE GENOMIC DNA]</scope>
    <source>
        <strain>Brown Norway</strain>
    </source>
</reference>
<reference key="2">
    <citation type="journal article" date="2006" name="J. Cell. Biochem.">
        <title>ARC protects rat cardiomyocytes against oxidative stress through inhibition of caspase-2 mediated mitochondrial pathway.</title>
        <authorList>
            <person name="Zhang Y.Q."/>
            <person name="Herman B."/>
        </authorList>
    </citation>
    <scope>INTERACTION WITH NOL3</scope>
</reference>
<dbReference type="EC" id="3.1.3.16" evidence="2"/>
<dbReference type="EMBL" id="AABR06042433">
    <property type="status" value="NOT_ANNOTATED_CDS"/>
    <property type="molecule type" value="Genomic_DNA"/>
</dbReference>
<dbReference type="EMBL" id="AABR06042434">
    <property type="status" value="NOT_ANNOTATED_CDS"/>
    <property type="molecule type" value="Genomic_DNA"/>
</dbReference>
<dbReference type="EMBL" id="AABR06042435">
    <property type="status" value="NOT_ANNOTATED_CDS"/>
    <property type="molecule type" value="Genomic_DNA"/>
</dbReference>
<dbReference type="SMR" id="F1LNI5"/>
<dbReference type="FunCoup" id="F1LNI5">
    <property type="interactions" value="3925"/>
</dbReference>
<dbReference type="IntAct" id="F1LNI5">
    <property type="interactions" value="1"/>
</dbReference>
<dbReference type="STRING" id="10116.ENSRNOP00000029414"/>
<dbReference type="PhosphoSitePlus" id="F1LNI5"/>
<dbReference type="jPOST" id="F1LNI5"/>
<dbReference type="PaxDb" id="10116-ENSRNOP00000029414"/>
<dbReference type="PeptideAtlas" id="F1LNI5"/>
<dbReference type="AGR" id="RGD:628676"/>
<dbReference type="RGD" id="628676">
    <property type="gene designation" value="Ppm1g"/>
</dbReference>
<dbReference type="eggNOG" id="KOG0699">
    <property type="taxonomic scope" value="Eukaryota"/>
</dbReference>
<dbReference type="HOGENOM" id="CLU_013173_13_1_1"/>
<dbReference type="InParanoid" id="F1LNI5"/>
<dbReference type="PRO" id="PR:F1LNI5"/>
<dbReference type="Proteomes" id="UP000002494">
    <property type="component" value="Unplaced"/>
</dbReference>
<dbReference type="GO" id="GO:0005737">
    <property type="term" value="C:cytoplasm"/>
    <property type="evidence" value="ECO:0007669"/>
    <property type="project" value="UniProtKB-SubCell"/>
</dbReference>
<dbReference type="GO" id="GO:0016020">
    <property type="term" value="C:membrane"/>
    <property type="evidence" value="ECO:0007669"/>
    <property type="project" value="UniProtKB-SubCell"/>
</dbReference>
<dbReference type="GO" id="GO:0005654">
    <property type="term" value="C:nucleoplasm"/>
    <property type="evidence" value="ECO:0000318"/>
    <property type="project" value="GO_Central"/>
</dbReference>
<dbReference type="GO" id="GO:0005634">
    <property type="term" value="C:nucleus"/>
    <property type="evidence" value="ECO:0000266"/>
    <property type="project" value="RGD"/>
</dbReference>
<dbReference type="GO" id="GO:0046872">
    <property type="term" value="F:metal ion binding"/>
    <property type="evidence" value="ECO:0007669"/>
    <property type="project" value="UniProtKB-KW"/>
</dbReference>
<dbReference type="GO" id="GO:0004721">
    <property type="term" value="F:phosphoprotein phosphatase activity"/>
    <property type="evidence" value="ECO:0000266"/>
    <property type="project" value="RGD"/>
</dbReference>
<dbReference type="GO" id="GO:0004722">
    <property type="term" value="F:protein serine/threonine phosphatase activity"/>
    <property type="evidence" value="ECO:0000266"/>
    <property type="project" value="RGD"/>
</dbReference>
<dbReference type="GO" id="GO:0051726">
    <property type="term" value="P:regulation of cell cycle"/>
    <property type="evidence" value="ECO:0000266"/>
    <property type="project" value="RGD"/>
</dbReference>
<dbReference type="GO" id="GO:0007165">
    <property type="term" value="P:signal transduction"/>
    <property type="evidence" value="ECO:0000318"/>
    <property type="project" value="GO_Central"/>
</dbReference>
<dbReference type="CDD" id="cd00143">
    <property type="entry name" value="PP2Cc"/>
    <property type="match status" value="1"/>
</dbReference>
<dbReference type="FunFam" id="3.60.40.10:FF:000023">
    <property type="entry name" value="Protein phosphatase, Mg2+/Mn2+-dependent, 1G"/>
    <property type="match status" value="1"/>
</dbReference>
<dbReference type="FunFam" id="3.60.40.10:FF:000029">
    <property type="entry name" value="Protein phosphatase, Mg2+/Mn2+-dependent, 1G"/>
    <property type="match status" value="1"/>
</dbReference>
<dbReference type="Gene3D" id="3.60.40.10">
    <property type="entry name" value="PPM-type phosphatase domain"/>
    <property type="match status" value="2"/>
</dbReference>
<dbReference type="InterPro" id="IPR015655">
    <property type="entry name" value="PP2C"/>
</dbReference>
<dbReference type="InterPro" id="IPR000222">
    <property type="entry name" value="PP2C_BS"/>
</dbReference>
<dbReference type="InterPro" id="IPR036457">
    <property type="entry name" value="PPM-type-like_dom_sf"/>
</dbReference>
<dbReference type="InterPro" id="IPR001932">
    <property type="entry name" value="PPM-type_phosphatase-like_dom"/>
</dbReference>
<dbReference type="PANTHER" id="PTHR13832:SF803">
    <property type="entry name" value="PROTEIN PHOSPHATASE 1G"/>
    <property type="match status" value="1"/>
</dbReference>
<dbReference type="PANTHER" id="PTHR13832">
    <property type="entry name" value="PROTEIN PHOSPHATASE 2C"/>
    <property type="match status" value="1"/>
</dbReference>
<dbReference type="Pfam" id="PF00481">
    <property type="entry name" value="PP2C"/>
    <property type="match status" value="2"/>
</dbReference>
<dbReference type="SMART" id="SM00332">
    <property type="entry name" value="PP2Cc"/>
    <property type="match status" value="1"/>
</dbReference>
<dbReference type="SUPFAM" id="SSF81606">
    <property type="entry name" value="PP2C-like"/>
    <property type="match status" value="1"/>
</dbReference>
<dbReference type="PROSITE" id="PS01032">
    <property type="entry name" value="PPM_1"/>
    <property type="match status" value="1"/>
</dbReference>
<dbReference type="PROSITE" id="PS51746">
    <property type="entry name" value="PPM_2"/>
    <property type="match status" value="1"/>
</dbReference>
<sequence>MGAYLSQPNTVKCSGDGVGAPRLPLPYGFSAMQGWRVSMEDAHNCIPELDNETAMFSVYDGHGGEEVALYCAKYLPDIIKDQKAYKEGKLQKALQDAFLAIDAKLTTDEVIKELAQIAGRPTEDEDDKEKVADEDDVDNEEAALLHEEATMTIEELLTRYGQNCQKGPPHTKSGTGIGDEPEPQGLNGEAGPEDPSRETPSQENGPTAKGHTGPSSNSDHGTEAGQIGEPGTATGEAGPSCSSASDKLPRVAKSKFFEDSEDESDEVEEEEDDIEECSEDEDGYSSEEAENEEDEDDTEEAEEDDDEEMMVPGMEGKEEPGSDSGTTAVVALIRGKQLIVANAGDSRCVVSEAGKALDMSYDHKPEDEVELARIKNAGGKVTMDGRVNGGLNLSRAIGDHFYKRNKNLPPQEQMISALPDIKVLTLTDDHEFMVIACDGIWNVMSSQEVVDFIQSKISQRDENGELRLLSSIVEELLDQCLAPDTSGDGTGCDNMTCIIICFKPRNTVELQPESGKRKLEEALSTEGAEENGNSDKKKAKRD</sequence>
<comment type="catalytic activity">
    <reaction evidence="4">
        <text>O-phospho-L-seryl-[protein] + H2O = L-seryl-[protein] + phosphate</text>
        <dbReference type="Rhea" id="RHEA:20629"/>
        <dbReference type="Rhea" id="RHEA-COMP:9863"/>
        <dbReference type="Rhea" id="RHEA-COMP:11604"/>
        <dbReference type="ChEBI" id="CHEBI:15377"/>
        <dbReference type="ChEBI" id="CHEBI:29999"/>
        <dbReference type="ChEBI" id="CHEBI:43474"/>
        <dbReference type="ChEBI" id="CHEBI:83421"/>
        <dbReference type="EC" id="3.1.3.16"/>
    </reaction>
    <physiologicalReaction direction="left-to-right" evidence="7">
        <dbReference type="Rhea" id="RHEA:20630"/>
    </physiologicalReaction>
</comment>
<comment type="catalytic activity">
    <reaction evidence="3">
        <text>O-phospho-L-threonyl-[protein] + H2O = L-threonyl-[protein] + phosphate</text>
        <dbReference type="Rhea" id="RHEA:47004"/>
        <dbReference type="Rhea" id="RHEA-COMP:11060"/>
        <dbReference type="Rhea" id="RHEA-COMP:11605"/>
        <dbReference type="ChEBI" id="CHEBI:15377"/>
        <dbReference type="ChEBI" id="CHEBI:30013"/>
        <dbReference type="ChEBI" id="CHEBI:43474"/>
        <dbReference type="ChEBI" id="CHEBI:61977"/>
        <dbReference type="EC" id="3.1.3.16"/>
    </reaction>
    <physiologicalReaction direction="left-to-right" evidence="3">
        <dbReference type="Rhea" id="RHEA:47005"/>
    </physiologicalReaction>
</comment>
<comment type="cofactor">
    <cofactor evidence="2">
        <name>Mg(2+)</name>
        <dbReference type="ChEBI" id="CHEBI:18420"/>
    </cofactor>
    <cofactor evidence="2">
        <name>Mn(2+)</name>
        <dbReference type="ChEBI" id="CHEBI:29035"/>
    </cofactor>
    <text evidence="4">Binds 2 magnesium or manganese ions per subunit.</text>
</comment>
<comment type="subunit">
    <text evidence="6 8">Interacts with NOL3; may dephosphorylate NOL3.</text>
</comment>
<comment type="subcellular location">
    <subcellularLocation>
        <location evidence="7">Cytoplasm</location>
    </subcellularLocation>
    <subcellularLocation>
        <location evidence="1">Membrane</location>
        <topology evidence="1">Lipid-anchor</topology>
    </subcellularLocation>
</comment>
<comment type="similarity">
    <text evidence="7">Belongs to the PP2C family.</text>
</comment>
<accession>F1LNI5</accession>
<feature type="initiator methionine" description="Removed" evidence="1">
    <location>
        <position position="1"/>
    </location>
</feature>
<feature type="chain" id="PRO_0000432429" description="Protein phosphatase 1G">
    <location>
        <begin position="2"/>
        <end position="542"/>
    </location>
</feature>
<feature type="domain" description="PPM-type phosphatase" evidence="4">
    <location>
        <begin position="26"/>
        <end position="502"/>
    </location>
</feature>
<feature type="region of interest" description="Disordered" evidence="5">
    <location>
        <begin position="118"/>
        <end position="139"/>
    </location>
</feature>
<feature type="region of interest" description="Disordered" evidence="5">
    <location>
        <begin position="162"/>
        <end position="325"/>
    </location>
</feature>
<feature type="region of interest" description="Disordered" evidence="5">
    <location>
        <begin position="510"/>
        <end position="542"/>
    </location>
</feature>
<feature type="compositionally biased region" description="Acidic residues" evidence="5">
    <location>
        <begin position="123"/>
        <end position="139"/>
    </location>
</feature>
<feature type="compositionally biased region" description="Acidic residues" evidence="5">
    <location>
        <begin position="259"/>
        <end position="309"/>
    </location>
</feature>
<feature type="binding site" evidence="2">
    <location>
        <position position="60"/>
    </location>
    <ligand>
        <name>Mn(2+)</name>
        <dbReference type="ChEBI" id="CHEBI:29035"/>
        <label>1</label>
    </ligand>
</feature>
<feature type="binding site" evidence="2">
    <location>
        <position position="60"/>
    </location>
    <ligand>
        <name>Mn(2+)</name>
        <dbReference type="ChEBI" id="CHEBI:29035"/>
        <label>2</label>
    </ligand>
</feature>
<feature type="binding site" evidence="2">
    <location>
        <position position="61"/>
    </location>
    <ligand>
        <name>Mn(2+)</name>
        <dbReference type="ChEBI" id="CHEBI:29035"/>
        <label>1</label>
    </ligand>
</feature>
<feature type="binding site" evidence="2">
    <location>
        <position position="438"/>
    </location>
    <ligand>
        <name>Mn(2+)</name>
        <dbReference type="ChEBI" id="CHEBI:29035"/>
        <label>2</label>
    </ligand>
</feature>
<feature type="binding site" evidence="2">
    <location>
        <position position="493"/>
    </location>
    <ligand>
        <name>Mn(2+)</name>
        <dbReference type="ChEBI" id="CHEBI:29035"/>
        <label>2</label>
    </ligand>
</feature>
<feature type="modified residue" description="Omega-N-methylarginine" evidence="1">
    <location>
        <position position="22"/>
    </location>
</feature>
<feature type="modified residue" description="Phosphothreonine" evidence="1">
    <location>
        <position position="122"/>
    </location>
</feature>
<feature type="modified residue" description="N6-acetyllysine" evidence="1">
    <location>
        <position position="380"/>
    </location>
</feature>
<feature type="modified residue" description="Phosphoserine" evidence="1">
    <location>
        <position position="524"/>
    </location>
</feature>
<feature type="lipid moiety-binding region" description="N-myristoyl glycine" evidence="1">
    <location>
        <position position="2"/>
    </location>
</feature>
<organism>
    <name type="scientific">Rattus norvegicus</name>
    <name type="common">Rat</name>
    <dbReference type="NCBI Taxonomy" id="10116"/>
    <lineage>
        <taxon>Eukaryota</taxon>
        <taxon>Metazoa</taxon>
        <taxon>Chordata</taxon>
        <taxon>Craniata</taxon>
        <taxon>Vertebrata</taxon>
        <taxon>Euteleostomi</taxon>
        <taxon>Mammalia</taxon>
        <taxon>Eutheria</taxon>
        <taxon>Euarchontoglires</taxon>
        <taxon>Glires</taxon>
        <taxon>Rodentia</taxon>
        <taxon>Myomorpha</taxon>
        <taxon>Muroidea</taxon>
        <taxon>Muridae</taxon>
        <taxon>Murinae</taxon>
        <taxon>Rattus</taxon>
    </lineage>
</organism>
<keyword id="KW-0007">Acetylation</keyword>
<keyword id="KW-0131">Cell cycle</keyword>
<keyword id="KW-0963">Cytoplasm</keyword>
<keyword id="KW-0378">Hydrolase</keyword>
<keyword id="KW-0449">Lipoprotein</keyword>
<keyword id="KW-0460">Magnesium</keyword>
<keyword id="KW-0464">Manganese</keyword>
<keyword id="KW-0472">Membrane</keyword>
<keyword id="KW-0479">Metal-binding</keyword>
<keyword id="KW-0488">Methylation</keyword>
<keyword id="KW-0519">Myristate</keyword>
<keyword id="KW-0597">Phosphoprotein</keyword>
<keyword id="KW-0904">Protein phosphatase</keyword>
<keyword id="KW-1185">Reference proteome</keyword>
<keyword id="KW-0677">Repeat</keyword>
<gene>
    <name evidence="9" type="primary">Ppm1g</name>
</gene>
<proteinExistence type="evidence at protein level"/>
<name>PPM1G_RAT</name>
<protein>
    <recommendedName>
        <fullName evidence="7">Protein phosphatase 1G</fullName>
        <ecNumber evidence="2">3.1.3.16</ecNumber>
    </recommendedName>
    <alternativeName>
        <fullName evidence="7">Protein phosphatase magnesium-dependent 1 gamma</fullName>
    </alternativeName>
</protein>